<proteinExistence type="evidence at transcript level"/>
<organism>
    <name type="scientific">Ovis aries</name>
    <name type="common">Sheep</name>
    <dbReference type="NCBI Taxonomy" id="9940"/>
    <lineage>
        <taxon>Eukaryota</taxon>
        <taxon>Metazoa</taxon>
        <taxon>Chordata</taxon>
        <taxon>Craniata</taxon>
        <taxon>Vertebrata</taxon>
        <taxon>Euteleostomi</taxon>
        <taxon>Mammalia</taxon>
        <taxon>Eutheria</taxon>
        <taxon>Laurasiatheria</taxon>
        <taxon>Artiodactyla</taxon>
        <taxon>Ruminantia</taxon>
        <taxon>Pecora</taxon>
        <taxon>Bovidae</taxon>
        <taxon>Caprinae</taxon>
        <taxon>Ovis</taxon>
    </lineage>
</organism>
<evidence type="ECO:0000250" key="1"/>
<evidence type="ECO:0000250" key="2">
    <source>
        <dbReference type="UniProtKB" id="P10085"/>
    </source>
</evidence>
<evidence type="ECO:0000250" key="3">
    <source>
        <dbReference type="UniProtKB" id="P15172"/>
    </source>
</evidence>
<evidence type="ECO:0000250" key="4">
    <source>
        <dbReference type="UniProtKB" id="Q02346"/>
    </source>
</evidence>
<evidence type="ECO:0000255" key="5">
    <source>
        <dbReference type="PROSITE-ProRule" id="PRU00981"/>
    </source>
</evidence>
<evidence type="ECO:0000256" key="6">
    <source>
        <dbReference type="SAM" id="MobiDB-lite"/>
    </source>
</evidence>
<keyword id="KW-0007">Acetylation</keyword>
<keyword id="KW-0010">Activator</keyword>
<keyword id="KW-0217">Developmental protein</keyword>
<keyword id="KW-0221">Differentiation</keyword>
<keyword id="KW-0238">DNA-binding</keyword>
<keyword id="KW-0488">Methylation</keyword>
<keyword id="KW-0517">Myogenesis</keyword>
<keyword id="KW-0539">Nucleus</keyword>
<keyword id="KW-0597">Phosphoprotein</keyword>
<keyword id="KW-1185">Reference proteome</keyword>
<keyword id="KW-0804">Transcription</keyword>
<keyword id="KW-0805">Transcription regulation</keyword>
<keyword id="KW-0832">Ubl conjugation</keyword>
<accession>P29331</accession>
<sequence>MELLSPPLRDVDLTGPDGSLCNFATADDFYDDPCFDSPDLRFFEDLDPRLVHVGALLKPEEHSHFPAAAHPAPGAREDEHVRAPSGHHQAGRCLLWACKACKRKTTNADRRKAATMRERRRLSKVNEAFETLKRCTSSNPNQRLPKVEILRNAIRYIEGLQALLRDQDAAPPGAAAAFYAPGPLPPGRSGEHYSGDSDASSPRSNCSDGMMDYSGPPSGARRRNCYDRAYYSEAPNEPRPGKSAAVSSLDCLSSIVERISTESPAAPALLLADAPPESSPGPQEAAAGSEVECGTPAPSPDTAPQGLAGANPNPIYQVL</sequence>
<gene>
    <name type="primary">MYOD1</name>
    <name type="synonym">MYOD</name>
</gene>
<feature type="chain" id="PRO_0000127364" description="Myoblast determination protein 1">
    <location>
        <begin position="1"/>
        <end position="319"/>
    </location>
</feature>
<feature type="domain" description="bHLH" evidence="5">
    <location>
        <begin position="109"/>
        <end position="160"/>
    </location>
</feature>
<feature type="region of interest" description="Disordered" evidence="6">
    <location>
        <begin position="174"/>
        <end position="222"/>
    </location>
</feature>
<feature type="region of interest" description="Disordered" evidence="6">
    <location>
        <begin position="267"/>
        <end position="319"/>
    </location>
</feature>
<feature type="compositionally biased region" description="Polar residues" evidence="6">
    <location>
        <begin position="197"/>
        <end position="207"/>
    </location>
</feature>
<feature type="compositionally biased region" description="Low complexity" evidence="6">
    <location>
        <begin position="267"/>
        <end position="276"/>
    </location>
</feature>
<feature type="modified residue" description="N6-methyllysine; by EHMT2" evidence="3">
    <location>
        <position position="104"/>
    </location>
</feature>
<feature type="cross-link" description="Peptide (Met-Gly) (interchain with G-Cter in ubiquitin)" evidence="1">
    <location>
        <position position="1"/>
    </location>
</feature>
<name>MYOD1_SHEEP</name>
<dbReference type="EMBL" id="X62102">
    <property type="protein sequence ID" value="CAA44012.1"/>
    <property type="molecule type" value="mRNA"/>
</dbReference>
<dbReference type="PIR" id="S20086">
    <property type="entry name" value="S20086"/>
</dbReference>
<dbReference type="RefSeq" id="NP_001009390.1">
    <property type="nucleotide sequence ID" value="NM_001009390.1"/>
</dbReference>
<dbReference type="SMR" id="P29331"/>
<dbReference type="STRING" id="9940.ENSOARP00000022800"/>
<dbReference type="Ensembl" id="ENSOART00180054792">
    <property type="protein sequence ID" value="ENSOARP00180028964"/>
    <property type="gene ID" value="ENSOARG00180032759"/>
</dbReference>
<dbReference type="Ensembl" id="ENSOART00185054939">
    <property type="protein sequence ID" value="ENSOARP00185027951"/>
    <property type="gene ID" value="ENSOARG00185032969"/>
</dbReference>
<dbReference type="Ensembl" id="ENSOART00215029801">
    <property type="protein sequence ID" value="ENSOARP00215015597"/>
    <property type="gene ID" value="ENSOARG00215017769"/>
</dbReference>
<dbReference type="Ensembl" id="ENSOART00220026867">
    <property type="protein sequence ID" value="ENSOARP00220014727"/>
    <property type="gene ID" value="ENSOARG00220016183"/>
</dbReference>
<dbReference type="Ensembl" id="ENSOART00225020224">
    <property type="protein sequence ID" value="ENSOARP00225009971"/>
    <property type="gene ID" value="ENSOARG00225012195"/>
</dbReference>
<dbReference type="Ensembl" id="ENSOART00260033743">
    <property type="protein sequence ID" value="ENSOARP00260017348"/>
    <property type="gene ID" value="ENSOARG00260020609"/>
</dbReference>
<dbReference type="GeneID" id="443405"/>
<dbReference type="KEGG" id="oas:443405"/>
<dbReference type="CTD" id="4654"/>
<dbReference type="OrthoDB" id="10049614at2759"/>
<dbReference type="Proteomes" id="UP000002356">
    <property type="component" value="Unplaced"/>
</dbReference>
<dbReference type="GO" id="GO:0000791">
    <property type="term" value="C:euchromatin"/>
    <property type="evidence" value="ECO:0007669"/>
    <property type="project" value="Ensembl"/>
</dbReference>
<dbReference type="GO" id="GO:0030016">
    <property type="term" value="C:myofibril"/>
    <property type="evidence" value="ECO:0007669"/>
    <property type="project" value="Ensembl"/>
</dbReference>
<dbReference type="GO" id="GO:0005654">
    <property type="term" value="C:nucleoplasm"/>
    <property type="evidence" value="ECO:0007669"/>
    <property type="project" value="Ensembl"/>
</dbReference>
<dbReference type="GO" id="GO:0005634">
    <property type="term" value="C:nucleus"/>
    <property type="evidence" value="ECO:0000250"/>
    <property type="project" value="UniProtKB"/>
</dbReference>
<dbReference type="GO" id="GO:0005667">
    <property type="term" value="C:transcription regulator complex"/>
    <property type="evidence" value="ECO:0000250"/>
    <property type="project" value="AgBase"/>
</dbReference>
<dbReference type="GO" id="GO:0043425">
    <property type="term" value="F:bHLH transcription factor binding"/>
    <property type="evidence" value="ECO:0000250"/>
    <property type="project" value="AgBase"/>
</dbReference>
<dbReference type="GO" id="GO:0003682">
    <property type="term" value="F:chromatin binding"/>
    <property type="evidence" value="ECO:0000250"/>
    <property type="project" value="UniProtKB"/>
</dbReference>
<dbReference type="GO" id="GO:0031490">
    <property type="term" value="F:chromatin DNA binding"/>
    <property type="evidence" value="ECO:0007669"/>
    <property type="project" value="Ensembl"/>
</dbReference>
<dbReference type="GO" id="GO:0001216">
    <property type="term" value="F:DNA-binding transcription activator activity"/>
    <property type="evidence" value="ECO:0000250"/>
    <property type="project" value="UniProtKB"/>
</dbReference>
<dbReference type="GO" id="GO:0001228">
    <property type="term" value="F:DNA-binding transcription activator activity, RNA polymerase II-specific"/>
    <property type="evidence" value="ECO:0007669"/>
    <property type="project" value="Ensembl"/>
</dbReference>
<dbReference type="GO" id="GO:0003700">
    <property type="term" value="F:DNA-binding transcription factor activity"/>
    <property type="evidence" value="ECO:0000250"/>
    <property type="project" value="AgBase"/>
</dbReference>
<dbReference type="GO" id="GO:0070888">
    <property type="term" value="F:E-box binding"/>
    <property type="evidence" value="ECO:0000250"/>
    <property type="project" value="UniProtKB"/>
</dbReference>
<dbReference type="GO" id="GO:0016922">
    <property type="term" value="F:nuclear receptor binding"/>
    <property type="evidence" value="ECO:0007669"/>
    <property type="project" value="Ensembl"/>
</dbReference>
<dbReference type="GO" id="GO:1990841">
    <property type="term" value="F:promoter-specific chromatin binding"/>
    <property type="evidence" value="ECO:0000250"/>
    <property type="project" value="UniProtKB"/>
</dbReference>
<dbReference type="GO" id="GO:0042803">
    <property type="term" value="F:protein homodimerization activity"/>
    <property type="evidence" value="ECO:0007669"/>
    <property type="project" value="Ensembl"/>
</dbReference>
<dbReference type="GO" id="GO:0031625">
    <property type="term" value="F:ubiquitin protein ligase binding"/>
    <property type="evidence" value="ECO:0007669"/>
    <property type="project" value="Ensembl"/>
</dbReference>
<dbReference type="GO" id="GO:0071392">
    <property type="term" value="P:cellular response to estradiol stimulus"/>
    <property type="evidence" value="ECO:0000250"/>
    <property type="project" value="UniProtKB"/>
</dbReference>
<dbReference type="GO" id="GO:0071385">
    <property type="term" value="P:cellular response to glucocorticoid stimulus"/>
    <property type="evidence" value="ECO:0007669"/>
    <property type="project" value="Ensembl"/>
</dbReference>
<dbReference type="GO" id="GO:0071453">
    <property type="term" value="P:cellular response to oxygen levels"/>
    <property type="evidence" value="ECO:0007669"/>
    <property type="project" value="Ensembl"/>
</dbReference>
<dbReference type="GO" id="GO:0009267">
    <property type="term" value="P:cellular response to starvation"/>
    <property type="evidence" value="ECO:0007669"/>
    <property type="project" value="Ensembl"/>
</dbReference>
<dbReference type="GO" id="GO:0071356">
    <property type="term" value="P:cellular response to tumor necrosis factor"/>
    <property type="evidence" value="ECO:0007669"/>
    <property type="project" value="Ensembl"/>
</dbReference>
<dbReference type="GO" id="GO:0006351">
    <property type="term" value="P:DNA-templated transcription"/>
    <property type="evidence" value="ECO:0000250"/>
    <property type="project" value="AgBase"/>
</dbReference>
<dbReference type="GO" id="GO:0007517">
    <property type="term" value="P:muscle organ development"/>
    <property type="evidence" value="ECO:0000250"/>
    <property type="project" value="AgBase"/>
</dbReference>
<dbReference type="GO" id="GO:0045445">
    <property type="term" value="P:myoblast differentiation"/>
    <property type="evidence" value="ECO:0000250"/>
    <property type="project" value="UniProtKB"/>
</dbReference>
<dbReference type="GO" id="GO:0007518">
    <property type="term" value="P:myoblast fate determination"/>
    <property type="evidence" value="ECO:0000250"/>
    <property type="project" value="UniProtKB"/>
</dbReference>
<dbReference type="GO" id="GO:0007520">
    <property type="term" value="P:myoblast fusion"/>
    <property type="evidence" value="ECO:0007669"/>
    <property type="project" value="Ensembl"/>
</dbReference>
<dbReference type="GO" id="GO:0014908">
    <property type="term" value="P:myotube differentiation involved in skeletal muscle regeneration"/>
    <property type="evidence" value="ECO:0007669"/>
    <property type="project" value="Ensembl"/>
</dbReference>
<dbReference type="GO" id="GO:2000818">
    <property type="term" value="P:negative regulation of myoblast proliferation"/>
    <property type="evidence" value="ECO:0007669"/>
    <property type="project" value="Ensembl"/>
</dbReference>
<dbReference type="GO" id="GO:0051149">
    <property type="term" value="P:positive regulation of muscle cell differentiation"/>
    <property type="evidence" value="ECO:0000250"/>
    <property type="project" value="UniProtKB"/>
</dbReference>
<dbReference type="GO" id="GO:0045663">
    <property type="term" value="P:positive regulation of myoblast differentiation"/>
    <property type="evidence" value="ECO:0007669"/>
    <property type="project" value="TreeGrafter"/>
</dbReference>
<dbReference type="GO" id="GO:1901741">
    <property type="term" value="P:positive regulation of myoblast fusion"/>
    <property type="evidence" value="ECO:0007669"/>
    <property type="project" value="Ensembl"/>
</dbReference>
<dbReference type="GO" id="GO:0048743">
    <property type="term" value="P:positive regulation of skeletal muscle fiber development"/>
    <property type="evidence" value="ECO:0007669"/>
    <property type="project" value="TreeGrafter"/>
</dbReference>
<dbReference type="GO" id="GO:0043415">
    <property type="term" value="P:positive regulation of skeletal muscle tissue regeneration"/>
    <property type="evidence" value="ECO:0000250"/>
    <property type="project" value="UniProtKB"/>
</dbReference>
<dbReference type="GO" id="GO:1905382">
    <property type="term" value="P:positive regulation of snRNA transcription by RNA polymerase II"/>
    <property type="evidence" value="ECO:0000250"/>
    <property type="project" value="UniProtKB"/>
</dbReference>
<dbReference type="GO" id="GO:0045944">
    <property type="term" value="P:positive regulation of transcription by RNA polymerase II"/>
    <property type="evidence" value="ECO:0000250"/>
    <property type="project" value="UniProtKB"/>
</dbReference>
<dbReference type="GO" id="GO:0000381">
    <property type="term" value="P:regulation of alternative mRNA splicing, via spliceosome"/>
    <property type="evidence" value="ECO:0000250"/>
    <property type="project" value="UniProtKB"/>
</dbReference>
<dbReference type="GO" id="GO:0035914">
    <property type="term" value="P:skeletal muscle cell differentiation"/>
    <property type="evidence" value="ECO:0007669"/>
    <property type="project" value="Ensembl"/>
</dbReference>
<dbReference type="GO" id="GO:0043503">
    <property type="term" value="P:skeletal muscle fiber adaptation"/>
    <property type="evidence" value="ECO:0007669"/>
    <property type="project" value="Ensembl"/>
</dbReference>
<dbReference type="GO" id="GO:0048741">
    <property type="term" value="P:skeletal muscle fiber development"/>
    <property type="evidence" value="ECO:0007669"/>
    <property type="project" value="Ensembl"/>
</dbReference>
<dbReference type="GO" id="GO:0007519">
    <property type="term" value="P:skeletal muscle tissue development"/>
    <property type="evidence" value="ECO:0000250"/>
    <property type="project" value="UniProtKB"/>
</dbReference>
<dbReference type="GO" id="GO:0051146">
    <property type="term" value="P:striated muscle cell differentiation"/>
    <property type="evidence" value="ECO:0000250"/>
    <property type="project" value="UniProtKB"/>
</dbReference>
<dbReference type="GO" id="GO:0006366">
    <property type="term" value="P:transcription by RNA polymerase II"/>
    <property type="evidence" value="ECO:0007669"/>
    <property type="project" value="Ensembl"/>
</dbReference>
<dbReference type="CDD" id="cd18936">
    <property type="entry name" value="bHLH_TS_MYOD1_Myf3"/>
    <property type="match status" value="1"/>
</dbReference>
<dbReference type="FunFam" id="4.10.280.10:FF:000005">
    <property type="entry name" value="Myogenic factor"/>
    <property type="match status" value="1"/>
</dbReference>
<dbReference type="Gene3D" id="4.10.280.10">
    <property type="entry name" value="Helix-loop-helix DNA-binding domain"/>
    <property type="match status" value="1"/>
</dbReference>
<dbReference type="InterPro" id="IPR011598">
    <property type="entry name" value="bHLH_dom"/>
</dbReference>
<dbReference type="InterPro" id="IPR036638">
    <property type="entry name" value="HLH_DNA-bd_sf"/>
</dbReference>
<dbReference type="InterPro" id="IPR022032">
    <property type="entry name" value="Myf5"/>
</dbReference>
<dbReference type="InterPro" id="IPR002546">
    <property type="entry name" value="MyoD_N"/>
</dbReference>
<dbReference type="InterPro" id="IPR039704">
    <property type="entry name" value="Myogenic_factor"/>
</dbReference>
<dbReference type="PANTHER" id="PTHR11534:SF2">
    <property type="entry name" value="MYOBLAST DETERMINATION PROTEIN 1"/>
    <property type="match status" value="1"/>
</dbReference>
<dbReference type="PANTHER" id="PTHR11534">
    <property type="entry name" value="MYOGENIC FACTOR"/>
    <property type="match status" value="1"/>
</dbReference>
<dbReference type="Pfam" id="PF01586">
    <property type="entry name" value="Basic"/>
    <property type="match status" value="1"/>
</dbReference>
<dbReference type="Pfam" id="PF00010">
    <property type="entry name" value="HLH"/>
    <property type="match status" value="1"/>
</dbReference>
<dbReference type="Pfam" id="PF12232">
    <property type="entry name" value="Myf5"/>
    <property type="match status" value="1"/>
</dbReference>
<dbReference type="SMART" id="SM00520">
    <property type="entry name" value="BASIC"/>
    <property type="match status" value="1"/>
</dbReference>
<dbReference type="SMART" id="SM00353">
    <property type="entry name" value="HLH"/>
    <property type="match status" value="1"/>
</dbReference>
<dbReference type="SUPFAM" id="SSF47459">
    <property type="entry name" value="HLH, helix-loop-helix DNA-binding domain"/>
    <property type="match status" value="1"/>
</dbReference>
<dbReference type="PROSITE" id="PS50888">
    <property type="entry name" value="BHLH"/>
    <property type="match status" value="1"/>
</dbReference>
<comment type="function">
    <text evidence="1">Acts as a transcriptional activator that promotes transcription of muscle-specific target genes and plays a role in muscle differentiation. Together with MYF5 and MYOG, co-occupies muscle-specific gene promoter core region during myogenesis. Induces fibroblasts to differentiate into myoblasts. Interacts with and is inhibited by the twist protein. This interaction probably involves the basic domains of both proteins (By similarity).</text>
</comment>
<comment type="subunit">
    <text evidence="2 4">Efficient DNA binding requires dimerization with another bHLH protein. Seems to form active heterodimers with ITF-2. Interacts with SUV39H1. Interacts with DDX5. Interacts with CHD2. Interacts with TSC22D3 (By similarity). Interacts with SETD3 (By similarity). Interacts with P-TEFB complex; promotes the transcriptional activity of MYOD1 through its CDK9-mediated phosphorylation (By similarity). Interacts with CSRP3 (By similarity). Interacts with NUPR1 (By similarity).</text>
</comment>
<comment type="subcellular location">
    <subcellularLocation>
        <location>Nucleus</location>
    </subcellularLocation>
</comment>
<comment type="PTM">
    <text evidence="1">Phosphorylated by CDK9. This phosphorylation promotes its function in muscle differentiation (By similarity).</text>
</comment>
<comment type="PTM">
    <text evidence="1">Acetylated by a complex containing EP300 and PCAF. The acetylation is essential to activate target genes. Conversely, its deacetylation by SIRT1 inhibits its function (By similarity).</text>
</comment>
<comment type="PTM">
    <text evidence="1">Ubiquitinated on the N-terminus; which is required for proteasomal degradation.</text>
</comment>
<comment type="PTM">
    <text evidence="1">Methylation at Lys-104 by EHMT2/G9a inhibits myogenic activity.</text>
</comment>
<reference key="1">
    <citation type="journal article" date="1992" name="Nucleic Acids Res.">
        <title>Nucleotide sequence of the sheep MyoD1 gene.</title>
        <authorList>
            <person name="Huynen L."/>
            <person name="Bass J."/>
            <person name="Gardner R.C."/>
            <person name="Bellamy A.R."/>
        </authorList>
    </citation>
    <scope>NUCLEOTIDE SEQUENCE [MRNA]</scope>
    <source>
        <strain>Coopworth</strain>
        <tissue>Thigh muscle</tissue>
    </source>
</reference>
<protein>
    <recommendedName>
        <fullName>Myoblast determination protein 1</fullName>
    </recommendedName>
</protein>